<keyword id="KW-0007">Acetylation</keyword>
<keyword id="KW-0009">Actin-binding</keyword>
<keyword id="KW-0037">Angiogenesis</keyword>
<keyword id="KW-0130">Cell adhesion</keyword>
<keyword id="KW-0965">Cell junction</keyword>
<keyword id="KW-1003">Cell membrane</keyword>
<keyword id="KW-0133">Cell shape</keyword>
<keyword id="KW-0145">Chemotaxis</keyword>
<keyword id="KW-0970">Cilium biogenesis/degradation</keyword>
<keyword id="KW-0963">Cytoplasm</keyword>
<keyword id="KW-0206">Cytoskeleton</keyword>
<keyword id="KW-0472">Membrane</keyword>
<keyword id="KW-0597">Phosphoprotein</keyword>
<keyword id="KW-1185">Reference proteome</keyword>
<keyword id="KW-0677">Repeat</keyword>
<sequence>MATSPQKSPSVPKSPTPKSPPSRKKDDSFLGKLGGTLARRKKAKEVSEFQEEGMNAINLPLSPISFELDPEDTMLEENEVRTMVDPNSRNDPKLQELMKVLIDWINDVLVGERIIVKDLAEDLYDGQVLQKLFEKLESEKLNVAEVTQSEIAQKQKLQTVLEKINEALKLPPRSIKWNVDSVHAKNLVAILHLLVALSQYFRAPIRLPDHVSIQVVVVQKREGILQSRQIQEEITGNTEALSGRHERDAFDTLFDHAPDKLNVVKKTLITFVNKHLNKLNLEVTELETQFADGVYLVLLMGLLEGYFVPLHSFFLTPDSFEQKVLNVSFAFELMQDGGLEKPKPRPEDIVNCDLKSTLRVLYNLFTKYRNVE</sequence>
<feature type="initiator methionine" description="Removed" evidence="2">
    <location>
        <position position="1"/>
    </location>
</feature>
<feature type="chain" id="PRO_0000121582" description="Alpha-parvin">
    <location>
        <begin position="2"/>
        <end position="372"/>
    </location>
</feature>
<feature type="domain" description="Calponin-homology (CH) 1" evidence="4">
    <location>
        <begin position="95"/>
        <end position="202"/>
    </location>
</feature>
<feature type="domain" description="Calponin-homology (CH) 2" evidence="4">
    <location>
        <begin position="262"/>
        <end position="369"/>
    </location>
</feature>
<feature type="region of interest" description="Disordered" evidence="5">
    <location>
        <begin position="1"/>
        <end position="44"/>
    </location>
</feature>
<feature type="region of interest" description="Interaction with ARHGAP31" evidence="2">
    <location>
        <begin position="21"/>
        <end position="25"/>
    </location>
</feature>
<feature type="region of interest" description="Required for interaction with TESK1 and ILK" evidence="3">
    <location>
        <begin position="223"/>
        <end position="372"/>
    </location>
</feature>
<feature type="compositionally biased region" description="Low complexity" evidence="5">
    <location>
        <begin position="1"/>
        <end position="11"/>
    </location>
</feature>
<feature type="modified residue" description="N-acetylalanine" evidence="2">
    <location>
        <position position="2"/>
    </location>
</feature>
<feature type="modified residue" description="Phosphoserine" evidence="3">
    <location>
        <position position="8"/>
    </location>
</feature>
<feature type="modified residue" description="Phosphoserine" evidence="3">
    <location>
        <position position="14"/>
    </location>
</feature>
<feature type="modified residue" description="Phosphoserine" evidence="9">
    <location>
        <position position="19"/>
    </location>
</feature>
<feature type="modified residue" description="Phosphoserine" evidence="3">
    <location>
        <position position="28"/>
    </location>
</feature>
<feature type="modified residue" description="Phosphoserine" evidence="3">
    <location>
        <position position="62"/>
    </location>
</feature>
<protein>
    <recommendedName>
        <fullName>Alpha-parvin</fullName>
    </recommendedName>
    <alternativeName>
        <fullName>Actopaxin</fullName>
    </alternativeName>
</protein>
<reference key="1">
    <citation type="journal article" date="2000" name="J. Cell Biol.">
        <title>Actopaxin, a new focal adhesion protein that binds paxillin LD motifs and actin and regulates cell adhesion.</title>
        <authorList>
            <person name="Nikolopoulos S.N."/>
            <person name="Turner C.E."/>
        </authorList>
    </citation>
    <scope>NUCLEOTIDE SEQUENCE [MRNA]</scope>
    <scope>FUNCTION</scope>
    <scope>INTERACTION WITH ACTIN; PXN AND TGFB1I1</scope>
    <scope>SUBCELLULAR LOCATION</scope>
    <scope>TISSUE SPECIFICITY</scope>
</reference>
<reference key="2">
    <citation type="journal article" date="2005" name="J. Biol. Chem.">
        <title>Actopaxin interacts with TESK1 to regulate cell spreading on fibronectin.</title>
        <authorList>
            <person name="LaLonde D.P."/>
            <person name="Brown M.C."/>
            <person name="Bouverat B.P."/>
            <person name="Turner C.E."/>
        </authorList>
    </citation>
    <scope>INTERACTION WITH TESK1</scope>
</reference>
<reference key="3">
    <citation type="journal article" date="2012" name="Nat. Commun.">
        <title>Quantitative maps of protein phosphorylation sites across 14 different rat organs and tissues.</title>
        <authorList>
            <person name="Lundby A."/>
            <person name="Secher A."/>
            <person name="Lage K."/>
            <person name="Nordsborg N.B."/>
            <person name="Dmytriyev A."/>
            <person name="Lundby C."/>
            <person name="Olsen J.V."/>
        </authorList>
    </citation>
    <scope>PHOSPHORYLATION [LARGE SCALE ANALYSIS] AT SER-19</scope>
    <scope>IDENTIFICATION BY MASS SPECTROMETRY [LARGE SCALE ANALYSIS]</scope>
</reference>
<comment type="function">
    <text evidence="3 6">Plays a role in sarcomere organization and in smooth muscle cell contraction. Required for normal development of the embryonic cardiovascular system, and for normal septation of the heart outflow tract. Plays a role in sprouting angiogenesis and is required for normal adhesion of vascular smooth muscle cells to endothelial cells during blood vessel development (By similarity). Plays a role in the reorganization of the actin cytoskeleton, formation of lamellipodia and ciliogenesis. Plays a role in the establishment of cell polarity, cell adhesion, cell spreading, and directed cell migration. Within the IPP (ILK-PINCH-PARVIN) complex, binds to F-actin, promoting F-actin bundling, a process required to generate force for actin cytoskeleton reorganization and subsequent dynamic cell adhesion events such as cell spreading and migration (By similarity).</text>
</comment>
<comment type="subunit">
    <text evidence="3 6 7">Component of the heterotrimeric IPP (ILK-PINCH-PARVIN) complex composed of ILK, LIMS1/PINCH and PARVA; the complex binds to F-actin via the C-terminal tail of LIMS1 and the N-terminal region of PARVA, promoting F-actin filament bundling (By similarity). Interacts with TGFB1I1 (PubMed:11134073). Interacts with ARHGAP31 (By similarity). Interacts with the actin cytoskeleton (PubMed:11134073). Interacts (via C-terminus) with TESK1 (via C-terminus); the interaction inhibits TESK1 kinase activity (PubMed:15817463). Interacts with PXN/PAXILLIN (via LD motif 4) (PubMed:11134073).</text>
</comment>
<comment type="subcellular location">
    <subcellularLocation>
        <location evidence="6">Cell junction</location>
        <location evidence="6">Focal adhesion</location>
    </subcellularLocation>
    <subcellularLocation>
        <location evidence="6">Cell membrane</location>
        <topology evidence="6">Peripheral membrane protein</topology>
        <orientation evidence="6">Cytoplasmic side</orientation>
    </subcellularLocation>
    <subcellularLocation>
        <location evidence="6">Cytoplasm</location>
        <location evidence="6">Cytoskeleton</location>
    </subcellularLocation>
    <subcellularLocation>
        <location evidence="1">Cytoplasm</location>
        <location evidence="1">Myofibril</location>
        <location evidence="1">Sarcomere</location>
        <location evidence="1">Z line</location>
    </subcellularLocation>
</comment>
<comment type="tissue specificity">
    <text evidence="6">Widely expressed.</text>
</comment>
<comment type="similarity">
    <text evidence="8">Belongs to the parvin family.</text>
</comment>
<organism>
    <name type="scientific">Rattus norvegicus</name>
    <name type="common">Rat</name>
    <dbReference type="NCBI Taxonomy" id="10116"/>
    <lineage>
        <taxon>Eukaryota</taxon>
        <taxon>Metazoa</taxon>
        <taxon>Chordata</taxon>
        <taxon>Craniata</taxon>
        <taxon>Vertebrata</taxon>
        <taxon>Euteleostomi</taxon>
        <taxon>Mammalia</taxon>
        <taxon>Eutheria</taxon>
        <taxon>Euarchontoglires</taxon>
        <taxon>Glires</taxon>
        <taxon>Rodentia</taxon>
        <taxon>Myomorpha</taxon>
        <taxon>Muroidea</taxon>
        <taxon>Muridae</taxon>
        <taxon>Murinae</taxon>
        <taxon>Rattus</taxon>
    </lineage>
</organism>
<accession>Q9HB97</accession>
<evidence type="ECO:0000250" key="1"/>
<evidence type="ECO:0000250" key="2">
    <source>
        <dbReference type="UniProtKB" id="Q9EPC1"/>
    </source>
</evidence>
<evidence type="ECO:0000250" key="3">
    <source>
        <dbReference type="UniProtKB" id="Q9NVD7"/>
    </source>
</evidence>
<evidence type="ECO:0000255" key="4">
    <source>
        <dbReference type="PROSITE-ProRule" id="PRU00044"/>
    </source>
</evidence>
<evidence type="ECO:0000256" key="5">
    <source>
        <dbReference type="SAM" id="MobiDB-lite"/>
    </source>
</evidence>
<evidence type="ECO:0000269" key="6">
    <source>
    </source>
</evidence>
<evidence type="ECO:0000269" key="7">
    <source>
    </source>
</evidence>
<evidence type="ECO:0000305" key="8"/>
<evidence type="ECO:0007744" key="9">
    <source>
    </source>
</evidence>
<name>PARVA_RAT</name>
<dbReference type="EMBL" id="AF264765">
    <property type="protein sequence ID" value="AAG09802.2"/>
    <property type="molecule type" value="mRNA"/>
</dbReference>
<dbReference type="RefSeq" id="NP_065707.2">
    <property type="nucleotide sequence ID" value="NM_020656.2"/>
</dbReference>
<dbReference type="BMRB" id="Q9HB97"/>
<dbReference type="SMR" id="Q9HB97"/>
<dbReference type="BioGRID" id="248617">
    <property type="interactions" value="1"/>
</dbReference>
<dbReference type="FunCoup" id="Q9HB97">
    <property type="interactions" value="1663"/>
</dbReference>
<dbReference type="IntAct" id="Q9HB97">
    <property type="interactions" value="4"/>
</dbReference>
<dbReference type="STRING" id="10116.ENSRNOP00000021671"/>
<dbReference type="iPTMnet" id="Q9HB97"/>
<dbReference type="PhosphoSitePlus" id="Q9HB97"/>
<dbReference type="jPOST" id="Q9HB97"/>
<dbReference type="PaxDb" id="10116-ENSRNOP00000021671"/>
<dbReference type="GeneID" id="57341"/>
<dbReference type="KEGG" id="rno:57341"/>
<dbReference type="UCSC" id="RGD:71021">
    <property type="organism name" value="rat"/>
</dbReference>
<dbReference type="AGR" id="RGD:71021"/>
<dbReference type="CTD" id="55742"/>
<dbReference type="RGD" id="71021">
    <property type="gene designation" value="Parva"/>
</dbReference>
<dbReference type="eggNOG" id="KOG3631">
    <property type="taxonomic scope" value="Eukaryota"/>
</dbReference>
<dbReference type="InParanoid" id="Q9HB97"/>
<dbReference type="PhylomeDB" id="Q9HB97"/>
<dbReference type="Reactome" id="R-RNO-446343">
    <property type="pathway name" value="Localization of the PINCH-ILK-PARVIN complex to focal adhesions"/>
</dbReference>
<dbReference type="Reactome" id="R-RNO-446353">
    <property type="pathway name" value="Cell-extracellular matrix interactions"/>
</dbReference>
<dbReference type="Reactome" id="R-RNO-446388">
    <property type="pathway name" value="Regulation of cytoskeletal remodeling and cell spreading by IPP complex components"/>
</dbReference>
<dbReference type="PRO" id="PR:Q9HB97"/>
<dbReference type="Proteomes" id="UP000002494">
    <property type="component" value="Unplaced"/>
</dbReference>
<dbReference type="GO" id="GO:0015629">
    <property type="term" value="C:actin cytoskeleton"/>
    <property type="evidence" value="ECO:0000318"/>
    <property type="project" value="GO_Central"/>
</dbReference>
<dbReference type="GO" id="GO:0005737">
    <property type="term" value="C:cytoplasm"/>
    <property type="evidence" value="ECO:0000266"/>
    <property type="project" value="RGD"/>
</dbReference>
<dbReference type="GO" id="GO:0005925">
    <property type="term" value="C:focal adhesion"/>
    <property type="evidence" value="ECO:0000250"/>
    <property type="project" value="UniProtKB"/>
</dbReference>
<dbReference type="GO" id="GO:0030027">
    <property type="term" value="C:lamellipodium"/>
    <property type="evidence" value="ECO:0000266"/>
    <property type="project" value="RGD"/>
</dbReference>
<dbReference type="GO" id="GO:0005634">
    <property type="term" value="C:nucleus"/>
    <property type="evidence" value="ECO:0000266"/>
    <property type="project" value="RGD"/>
</dbReference>
<dbReference type="GO" id="GO:0005886">
    <property type="term" value="C:plasma membrane"/>
    <property type="evidence" value="ECO:0007669"/>
    <property type="project" value="UniProtKB-SubCell"/>
</dbReference>
<dbReference type="GO" id="GO:0032991">
    <property type="term" value="C:protein-containing complex"/>
    <property type="evidence" value="ECO:0000314"/>
    <property type="project" value="RGD"/>
</dbReference>
<dbReference type="GO" id="GO:0030018">
    <property type="term" value="C:Z disc"/>
    <property type="evidence" value="ECO:0007669"/>
    <property type="project" value="UniProtKB-SubCell"/>
</dbReference>
<dbReference type="GO" id="GO:0003779">
    <property type="term" value="F:actin binding"/>
    <property type="evidence" value="ECO:0000266"/>
    <property type="project" value="RGD"/>
</dbReference>
<dbReference type="GO" id="GO:0019904">
    <property type="term" value="F:protein domain specific binding"/>
    <property type="evidence" value="ECO:0000305"/>
    <property type="project" value="RGD"/>
</dbReference>
<dbReference type="GO" id="GO:0004860">
    <property type="term" value="F:protein kinase inhibitor activity"/>
    <property type="evidence" value="ECO:0000250"/>
    <property type="project" value="UniProtKB"/>
</dbReference>
<dbReference type="GO" id="GO:0044877">
    <property type="term" value="F:protein-containing complex binding"/>
    <property type="evidence" value="ECO:0000314"/>
    <property type="project" value="RGD"/>
</dbReference>
<dbReference type="GO" id="GO:0030036">
    <property type="term" value="P:actin cytoskeleton organization"/>
    <property type="evidence" value="ECO:0000314"/>
    <property type="project" value="RGD"/>
</dbReference>
<dbReference type="GO" id="GO:0070252">
    <property type="term" value="P:actin-mediated cell contraction"/>
    <property type="evidence" value="ECO:0000250"/>
    <property type="project" value="UniProtKB"/>
</dbReference>
<dbReference type="GO" id="GO:0007155">
    <property type="term" value="P:cell adhesion"/>
    <property type="evidence" value="ECO:0000266"/>
    <property type="project" value="RGD"/>
</dbReference>
<dbReference type="GO" id="GO:0060271">
    <property type="term" value="P:cilium assembly"/>
    <property type="evidence" value="ECO:0000250"/>
    <property type="project" value="UniProtKB"/>
</dbReference>
<dbReference type="GO" id="GO:0007163">
    <property type="term" value="P:establishment or maintenance of cell polarity"/>
    <property type="evidence" value="ECO:0000250"/>
    <property type="project" value="UniProtKB"/>
</dbReference>
<dbReference type="GO" id="GO:0071963">
    <property type="term" value="P:establishment or maintenance of cell polarity regulating cell shape"/>
    <property type="evidence" value="ECO:0000318"/>
    <property type="project" value="GO_Central"/>
</dbReference>
<dbReference type="GO" id="GO:0034113">
    <property type="term" value="P:heterotypic cell-cell adhesion"/>
    <property type="evidence" value="ECO:0000250"/>
    <property type="project" value="UniProtKB"/>
</dbReference>
<dbReference type="GO" id="GO:0003148">
    <property type="term" value="P:outflow tract septum morphogenesis"/>
    <property type="evidence" value="ECO:0000250"/>
    <property type="project" value="UniProtKB"/>
</dbReference>
<dbReference type="GO" id="GO:0071670">
    <property type="term" value="P:smooth muscle cell chemotaxis"/>
    <property type="evidence" value="ECO:0000250"/>
    <property type="project" value="UniProtKB"/>
</dbReference>
<dbReference type="GO" id="GO:0002040">
    <property type="term" value="P:sprouting angiogenesis"/>
    <property type="evidence" value="ECO:0000250"/>
    <property type="project" value="UniProtKB"/>
</dbReference>
<dbReference type="GO" id="GO:0034446">
    <property type="term" value="P:substrate adhesion-dependent cell spreading"/>
    <property type="evidence" value="ECO:0000250"/>
    <property type="project" value="UniProtKB"/>
</dbReference>
<dbReference type="CDD" id="cd21335">
    <property type="entry name" value="CH_PARVA_rpt1"/>
    <property type="match status" value="1"/>
</dbReference>
<dbReference type="CDD" id="cd21337">
    <property type="entry name" value="CH_PARVA_rpt2"/>
    <property type="match status" value="1"/>
</dbReference>
<dbReference type="FunFam" id="1.10.418.10:FF:000015">
    <property type="entry name" value="Parvin beta"/>
    <property type="match status" value="1"/>
</dbReference>
<dbReference type="FunFam" id="1.10.418.10:FF:000011">
    <property type="entry name" value="Parvin, beta"/>
    <property type="match status" value="1"/>
</dbReference>
<dbReference type="Gene3D" id="1.10.418.10">
    <property type="entry name" value="Calponin-like domain"/>
    <property type="match status" value="2"/>
</dbReference>
<dbReference type="InterPro" id="IPR001715">
    <property type="entry name" value="CH_dom"/>
</dbReference>
<dbReference type="InterPro" id="IPR036872">
    <property type="entry name" value="CH_dom_sf"/>
</dbReference>
<dbReference type="InterPro" id="IPR028433">
    <property type="entry name" value="Parvin"/>
</dbReference>
<dbReference type="PANTHER" id="PTHR12114:SF6">
    <property type="entry name" value="ALPHA-PARVIN"/>
    <property type="match status" value="1"/>
</dbReference>
<dbReference type="PANTHER" id="PTHR12114">
    <property type="entry name" value="PARVIN"/>
    <property type="match status" value="1"/>
</dbReference>
<dbReference type="Pfam" id="PF00307">
    <property type="entry name" value="CH"/>
    <property type="match status" value="2"/>
</dbReference>
<dbReference type="PIRSF" id="PIRSF039131">
    <property type="entry name" value="Parvin"/>
    <property type="match status" value="1"/>
</dbReference>
<dbReference type="SMART" id="SM00033">
    <property type="entry name" value="CH"/>
    <property type="match status" value="2"/>
</dbReference>
<dbReference type="SUPFAM" id="SSF47576">
    <property type="entry name" value="Calponin-homology domain, CH-domain"/>
    <property type="match status" value="1"/>
</dbReference>
<dbReference type="PROSITE" id="PS50021">
    <property type="entry name" value="CH"/>
    <property type="match status" value="2"/>
</dbReference>
<gene>
    <name type="primary">Parva</name>
    <name type="synonym">Actp</name>
</gene>
<proteinExistence type="evidence at protein level"/>